<gene>
    <name evidence="1" type="primary">wecF</name>
    <name evidence="1" type="synonym">rffT</name>
    <name type="ordered locus">YPTS_0189</name>
</gene>
<protein>
    <recommendedName>
        <fullName evidence="1">TDP-N-acetylfucosamine:lipid II N-acetylfucosaminyltransferase</fullName>
        <ecNumber evidence="1">2.4.1.325</ecNumber>
    </recommendedName>
    <alternativeName>
        <fullName evidence="1">4-alpha-L-fucosyltransferase</fullName>
    </alternativeName>
    <alternativeName>
        <fullName evidence="1">TDP-Fuc4NAc:lipid II Fuc4NAc transferase</fullName>
        <shortName evidence="1">Fuc4NAc transferase</shortName>
    </alternativeName>
</protein>
<dbReference type="EC" id="2.4.1.325" evidence="1"/>
<dbReference type="EMBL" id="CP001048">
    <property type="protein sequence ID" value="ACC87186.1"/>
    <property type="molecule type" value="Genomic_DNA"/>
</dbReference>
<dbReference type="RefSeq" id="WP_011191503.1">
    <property type="nucleotide sequence ID" value="NZ_CP009780.1"/>
</dbReference>
<dbReference type="SMR" id="B2K058"/>
<dbReference type="CAZy" id="GT56">
    <property type="family name" value="Glycosyltransferase Family 56"/>
</dbReference>
<dbReference type="KEGG" id="ypb:YPTS_0189"/>
<dbReference type="PATRIC" id="fig|502801.10.peg.3866"/>
<dbReference type="UniPathway" id="UPA00566"/>
<dbReference type="GO" id="GO:0005886">
    <property type="term" value="C:plasma membrane"/>
    <property type="evidence" value="ECO:0007669"/>
    <property type="project" value="UniProtKB-SubCell"/>
</dbReference>
<dbReference type="GO" id="GO:0102031">
    <property type="term" value="F:4-acetamido-4,6-dideoxy-D-galactose transferase activity"/>
    <property type="evidence" value="ECO:0007669"/>
    <property type="project" value="UniProtKB-EC"/>
</dbReference>
<dbReference type="GO" id="GO:0008417">
    <property type="term" value="F:fucosyltransferase activity"/>
    <property type="evidence" value="ECO:0007669"/>
    <property type="project" value="InterPro"/>
</dbReference>
<dbReference type="GO" id="GO:0009246">
    <property type="term" value="P:enterobacterial common antigen biosynthetic process"/>
    <property type="evidence" value="ECO:0007669"/>
    <property type="project" value="UniProtKB-UniRule"/>
</dbReference>
<dbReference type="GO" id="GO:0036065">
    <property type="term" value="P:fucosylation"/>
    <property type="evidence" value="ECO:0007669"/>
    <property type="project" value="InterPro"/>
</dbReference>
<dbReference type="HAMAP" id="MF_01002">
    <property type="entry name" value="WecF_RffT"/>
    <property type="match status" value="1"/>
</dbReference>
<dbReference type="InterPro" id="IPR009993">
    <property type="entry name" value="WecF"/>
</dbReference>
<dbReference type="NCBIfam" id="NF002753">
    <property type="entry name" value="PRK02797.1-2"/>
    <property type="match status" value="1"/>
</dbReference>
<dbReference type="Pfam" id="PF07429">
    <property type="entry name" value="Glyco_transf_56"/>
    <property type="match status" value="1"/>
</dbReference>
<comment type="function">
    <text evidence="1">Catalyzes the synthesis of Und-PP-GlcNAc-ManNAcA-Fuc4NAc (Lipid III), the third lipid-linked intermediate involved in ECA synthesis.</text>
</comment>
<comment type="catalytic activity">
    <reaction evidence="1">
        <text>beta-D-ManNAcA-(1-&gt;4)-alpha-D-GlcNAc-di-trans,octa-cis-undecaprenyl diphosphate + dTDP-4-acetamido-4,6-dideoxy-alpha-D-galactose = alpha-D-FucNAc4-(1-&gt;4)-beta-D-ManNAcA-(1-&gt;4)-D-GlcNAc-undecaprenyl diphosphate + dTDP + H(+)</text>
        <dbReference type="Rhea" id="RHEA:28759"/>
        <dbReference type="ChEBI" id="CHEBI:15378"/>
        <dbReference type="ChEBI" id="CHEBI:58369"/>
        <dbReference type="ChEBI" id="CHEBI:61495"/>
        <dbReference type="ChEBI" id="CHEBI:61496"/>
        <dbReference type="ChEBI" id="CHEBI:68493"/>
        <dbReference type="EC" id="2.4.1.325"/>
    </reaction>
</comment>
<comment type="pathway">
    <text evidence="1">Bacterial outer membrane biogenesis; enterobacterial common antigen biosynthesis.</text>
</comment>
<comment type="subcellular location">
    <subcellularLocation>
        <location evidence="1">Cell inner membrane</location>
        <topology evidence="1">Peripheral membrane protein</topology>
    </subcellularLocation>
</comment>
<comment type="similarity">
    <text evidence="1">Belongs to the glycosyltransferase 56 family.</text>
</comment>
<proteinExistence type="inferred from homology"/>
<evidence type="ECO:0000255" key="1">
    <source>
        <dbReference type="HAMAP-Rule" id="MF_01002"/>
    </source>
</evidence>
<keyword id="KW-0997">Cell inner membrane</keyword>
<keyword id="KW-1003">Cell membrane</keyword>
<keyword id="KW-0328">Glycosyltransferase</keyword>
<keyword id="KW-0472">Membrane</keyword>
<keyword id="KW-0808">Transferase</keyword>
<organism>
    <name type="scientific">Yersinia pseudotuberculosis serotype IB (strain PB1/+)</name>
    <dbReference type="NCBI Taxonomy" id="502801"/>
    <lineage>
        <taxon>Bacteria</taxon>
        <taxon>Pseudomonadati</taxon>
        <taxon>Pseudomonadota</taxon>
        <taxon>Gammaproteobacteria</taxon>
        <taxon>Enterobacterales</taxon>
        <taxon>Yersiniaceae</taxon>
        <taxon>Yersinia</taxon>
    </lineage>
</organism>
<reference key="1">
    <citation type="submission" date="2008-04" db="EMBL/GenBank/DDBJ databases">
        <title>Complete sequence of Yersinia pseudotuberculosis PB1/+.</title>
        <authorList>
            <person name="Copeland A."/>
            <person name="Lucas S."/>
            <person name="Lapidus A."/>
            <person name="Glavina del Rio T."/>
            <person name="Dalin E."/>
            <person name="Tice H."/>
            <person name="Bruce D."/>
            <person name="Goodwin L."/>
            <person name="Pitluck S."/>
            <person name="Munk A.C."/>
            <person name="Brettin T."/>
            <person name="Detter J.C."/>
            <person name="Han C."/>
            <person name="Tapia R."/>
            <person name="Schmutz J."/>
            <person name="Larimer F."/>
            <person name="Land M."/>
            <person name="Hauser L."/>
            <person name="Challacombe J.F."/>
            <person name="Green L."/>
            <person name="Lindler L.E."/>
            <person name="Nikolich M.P."/>
            <person name="Richardson P."/>
        </authorList>
    </citation>
    <scope>NUCLEOTIDE SEQUENCE [LARGE SCALE GENOMIC DNA]</scope>
    <source>
        <strain>PB1/+</strain>
    </source>
</reference>
<sequence>MITLTHVLGSDIPHHNLTVLRFFNDVLAKCLPVEQVRHFMVAAKETAPFSSFPQLDINTYSDKKALAEAVIARAQADRSARFFWHGQFNATLWLALLSGKIKPGQVYWHVWGADLYEDAKSLKFRLFYLLRRIAQGRVGHVFATRGDLIHYQQRHPRVPASLLYFPTRMDPALTAINIDKPLAGPMTILVGNSGDTTNRHIEALKAIHQQFGPDVRVIIPMGYPANNEAYIEQVRQAGLALFSQDNLRILTEQIPFDDYLNILRECDLGYFIFNRQQGIGTLCLLTQFGVPFVLSRKNPFWQDLAEQHIPVFFYGDTLDEPLIREAQRQLAGLDKQAIAFFNPNYIEGWKQALALAAGEHP</sequence>
<name>WECF_YERPB</name>
<accession>B2K058</accession>
<feature type="chain" id="PRO_1000134612" description="TDP-N-acetylfucosamine:lipid II N-acetylfucosaminyltransferase">
    <location>
        <begin position="1"/>
        <end position="361"/>
    </location>
</feature>